<reference key="1">
    <citation type="journal article" date="2000" name="Nature">
        <title>Complete DNA sequence of a serogroup A strain of Neisseria meningitidis Z2491.</title>
        <authorList>
            <person name="Parkhill J."/>
            <person name="Achtman M."/>
            <person name="James K.D."/>
            <person name="Bentley S.D."/>
            <person name="Churcher C.M."/>
            <person name="Klee S.R."/>
            <person name="Morelli G."/>
            <person name="Basham D."/>
            <person name="Brown D."/>
            <person name="Chillingworth T."/>
            <person name="Davies R.M."/>
            <person name="Davis P."/>
            <person name="Devlin K."/>
            <person name="Feltwell T."/>
            <person name="Hamlin N."/>
            <person name="Holroyd S."/>
            <person name="Jagels K."/>
            <person name="Leather S."/>
            <person name="Moule S."/>
            <person name="Mungall K.L."/>
            <person name="Quail M.A."/>
            <person name="Rajandream M.A."/>
            <person name="Rutherford K.M."/>
            <person name="Simmonds M."/>
            <person name="Skelton J."/>
            <person name="Whitehead S."/>
            <person name="Spratt B.G."/>
            <person name="Barrell B.G."/>
        </authorList>
    </citation>
    <scope>NUCLEOTIDE SEQUENCE [LARGE SCALE GENOMIC DNA]</scope>
    <source>
        <strain>DSM 15465 / Z2491</strain>
    </source>
</reference>
<protein>
    <recommendedName>
        <fullName>Bacterioferritin B</fullName>
        <shortName>BFR B</shortName>
    </recommendedName>
</protein>
<dbReference type="EMBL" id="AL157959">
    <property type="protein sequence ID" value="CAM08549.1"/>
    <property type="molecule type" value="Genomic_DNA"/>
</dbReference>
<dbReference type="SMR" id="P63699"/>
<dbReference type="EnsemblBacteria" id="CAM08549">
    <property type="protein sequence ID" value="CAM08549"/>
    <property type="gene ID" value="NMA1376"/>
</dbReference>
<dbReference type="KEGG" id="nma:NMA1376"/>
<dbReference type="HOGENOM" id="CLU_104506_2_0_4"/>
<dbReference type="Proteomes" id="UP000000626">
    <property type="component" value="Chromosome"/>
</dbReference>
<dbReference type="GO" id="GO:0005829">
    <property type="term" value="C:cytosol"/>
    <property type="evidence" value="ECO:0007669"/>
    <property type="project" value="TreeGrafter"/>
</dbReference>
<dbReference type="GO" id="GO:0008199">
    <property type="term" value="F:ferric iron binding"/>
    <property type="evidence" value="ECO:0007669"/>
    <property type="project" value="InterPro"/>
</dbReference>
<dbReference type="GO" id="GO:0004322">
    <property type="term" value="F:ferroxidase activity"/>
    <property type="evidence" value="ECO:0007669"/>
    <property type="project" value="TreeGrafter"/>
</dbReference>
<dbReference type="GO" id="GO:0020037">
    <property type="term" value="F:heme binding"/>
    <property type="evidence" value="ECO:0007669"/>
    <property type="project" value="TreeGrafter"/>
</dbReference>
<dbReference type="GO" id="GO:0006879">
    <property type="term" value="P:intracellular iron ion homeostasis"/>
    <property type="evidence" value="ECO:0007669"/>
    <property type="project" value="UniProtKB-KW"/>
</dbReference>
<dbReference type="GO" id="GO:0006826">
    <property type="term" value="P:iron ion transport"/>
    <property type="evidence" value="ECO:0007669"/>
    <property type="project" value="InterPro"/>
</dbReference>
<dbReference type="CDD" id="cd00907">
    <property type="entry name" value="Bacterioferritin"/>
    <property type="match status" value="1"/>
</dbReference>
<dbReference type="Gene3D" id="1.20.1260.10">
    <property type="match status" value="1"/>
</dbReference>
<dbReference type="InterPro" id="IPR002024">
    <property type="entry name" value="Bacterioferritin"/>
</dbReference>
<dbReference type="InterPro" id="IPR012347">
    <property type="entry name" value="Ferritin-like"/>
</dbReference>
<dbReference type="InterPro" id="IPR009040">
    <property type="entry name" value="Ferritin-like_diiron"/>
</dbReference>
<dbReference type="InterPro" id="IPR009078">
    <property type="entry name" value="Ferritin-like_SF"/>
</dbReference>
<dbReference type="InterPro" id="IPR008331">
    <property type="entry name" value="Ferritin_DPS_dom"/>
</dbReference>
<dbReference type="NCBIfam" id="TIGR00754">
    <property type="entry name" value="bfr"/>
    <property type="match status" value="1"/>
</dbReference>
<dbReference type="PANTHER" id="PTHR30295">
    <property type="entry name" value="BACTERIOFERRITIN"/>
    <property type="match status" value="1"/>
</dbReference>
<dbReference type="PANTHER" id="PTHR30295:SF0">
    <property type="entry name" value="BACTERIOFERRITIN"/>
    <property type="match status" value="1"/>
</dbReference>
<dbReference type="Pfam" id="PF00210">
    <property type="entry name" value="Ferritin"/>
    <property type="match status" value="1"/>
</dbReference>
<dbReference type="PIRSF" id="PIRSF002560">
    <property type="entry name" value="Bacterioferritin"/>
    <property type="match status" value="1"/>
</dbReference>
<dbReference type="PRINTS" id="PR00601">
    <property type="entry name" value="BACFERRITIN"/>
</dbReference>
<dbReference type="SUPFAM" id="SSF47240">
    <property type="entry name" value="Ferritin-like"/>
    <property type="match status" value="1"/>
</dbReference>
<dbReference type="PROSITE" id="PS00549">
    <property type="entry name" value="BACTERIOFERRITIN"/>
    <property type="match status" value="1"/>
</dbReference>
<dbReference type="PROSITE" id="PS50905">
    <property type="entry name" value="FERRITIN_LIKE"/>
    <property type="match status" value="1"/>
</dbReference>
<proteinExistence type="inferred from homology"/>
<name>BFRB_NEIMA</name>
<evidence type="ECO:0000250" key="1">
    <source>
        <dbReference type="UniProtKB" id="P77914"/>
    </source>
</evidence>
<evidence type="ECO:0000250" key="2">
    <source>
        <dbReference type="UniProtKB" id="Q9HY79"/>
    </source>
</evidence>
<evidence type="ECO:0000255" key="3">
    <source>
        <dbReference type="PROSITE-ProRule" id="PRU00085"/>
    </source>
</evidence>
<evidence type="ECO:0000305" key="4"/>
<comment type="function">
    <text evidence="1">Iron-storage protein, plays a role in protection against oxidative stress.</text>
</comment>
<comment type="cofactor">
    <cofactor evidence="2">
        <name>heme b</name>
        <dbReference type="ChEBI" id="CHEBI:60344"/>
    </cofactor>
    <text evidence="2">Binds 1 heme b (iron(II)-protoporphyrin IX) group per dimer.</text>
</comment>
<comment type="subunit">
    <text evidence="2">Heterooligomer of 24 subunits, arranged as 12 dimers, that are packed together to form an approximately spherical molecule with a central cavity, in which large amounts of iron can be deposited.</text>
</comment>
<comment type="similarity">
    <text evidence="4">Belongs to the bacterioferritin family.</text>
</comment>
<keyword id="KW-0349">Heme</keyword>
<keyword id="KW-0408">Iron</keyword>
<keyword id="KW-0409">Iron storage</keyword>
<keyword id="KW-0479">Metal-binding</keyword>
<sequence>MKGDRLVIRELNKNLGLLLVTINQYFLHARILKNWGFEELGEHFFKQSIVEMKAADDLIERILFLEGLPNLQELGKLLIGESTEEIIACDLTKEQEKHEALLAAIATAEAQQDYVSRDLLEKQKDTNEEHIDWLETQQELIGKIGLPNYLQTAAQED</sequence>
<accession>P63699</accession>
<accession>A1IS01</accession>
<accession>P56999</accession>
<feature type="chain" id="PRO_0000192607" description="Bacterioferritin B">
    <location>
        <begin position="1"/>
        <end position="157"/>
    </location>
</feature>
<feature type="domain" description="Ferritin-like diiron" evidence="3">
    <location>
        <begin position="1"/>
        <end position="145"/>
    </location>
</feature>
<feature type="binding site" evidence="3">
    <location>
        <position position="51"/>
    </location>
    <ligand>
        <name>Fe cation</name>
        <dbReference type="ChEBI" id="CHEBI:24875"/>
    </ligand>
</feature>
<feature type="binding site" description="axial binding residue" evidence="3">
    <location>
        <position position="52"/>
    </location>
    <ligand>
        <name>heme b</name>
        <dbReference type="ChEBI" id="CHEBI:60344"/>
        <note>ligand shared between dimeric partners</note>
    </ligand>
    <ligandPart>
        <name>Fe</name>
        <dbReference type="ChEBI" id="CHEBI:18248"/>
    </ligandPart>
</feature>
<feature type="binding site" evidence="3">
    <location>
        <position position="94"/>
    </location>
    <ligand>
        <name>Fe cation</name>
        <dbReference type="ChEBI" id="CHEBI:24875"/>
    </ligand>
</feature>
<feature type="binding site" evidence="3">
    <location>
        <position position="130"/>
    </location>
    <ligand>
        <name>Fe cation</name>
        <dbReference type="ChEBI" id="CHEBI:24875"/>
    </ligand>
</feature>
<organism>
    <name type="scientific">Neisseria meningitidis serogroup A / serotype 4A (strain DSM 15465 / Z2491)</name>
    <dbReference type="NCBI Taxonomy" id="122587"/>
    <lineage>
        <taxon>Bacteria</taxon>
        <taxon>Pseudomonadati</taxon>
        <taxon>Pseudomonadota</taxon>
        <taxon>Betaproteobacteria</taxon>
        <taxon>Neisseriales</taxon>
        <taxon>Neisseriaceae</taxon>
        <taxon>Neisseria</taxon>
    </lineage>
</organism>
<gene>
    <name type="primary">bfrB</name>
    <name type="ordered locus">NMA1376</name>
</gene>